<keyword id="KW-0963">Cytoplasm</keyword>
<keyword id="KW-0489">Methyltransferase</keyword>
<keyword id="KW-1185">Reference proteome</keyword>
<keyword id="KW-0698">rRNA processing</keyword>
<keyword id="KW-0949">S-adenosyl-L-methionine</keyword>
<keyword id="KW-0808">Transferase</keyword>
<organism>
    <name type="scientific">Borreliella burgdorferi (strain ATCC 35210 / DSM 4680 / CIP 102532 / B31)</name>
    <name type="common">Borrelia burgdorferi</name>
    <dbReference type="NCBI Taxonomy" id="224326"/>
    <lineage>
        <taxon>Bacteria</taxon>
        <taxon>Pseudomonadati</taxon>
        <taxon>Spirochaetota</taxon>
        <taxon>Spirochaetia</taxon>
        <taxon>Spirochaetales</taxon>
        <taxon>Borreliaceae</taxon>
        <taxon>Borreliella</taxon>
    </lineage>
</organism>
<comment type="function">
    <text evidence="1">Specifically methylates the N7 position of a guanine in 16S rRNA.</text>
</comment>
<comment type="subcellular location">
    <subcellularLocation>
        <location evidence="1">Cytoplasm</location>
    </subcellularLocation>
</comment>
<comment type="similarity">
    <text evidence="1">Belongs to the methyltransferase superfamily. RNA methyltransferase RsmG family.</text>
</comment>
<proteinExistence type="inferred from homology"/>
<protein>
    <recommendedName>
        <fullName evidence="1">Ribosomal RNA small subunit methyltransferase G</fullName>
        <ecNumber evidence="1">2.1.1.-</ecNumber>
    </recommendedName>
    <alternativeName>
        <fullName evidence="1">16S rRNA 7-methylguanosine methyltransferase</fullName>
        <shortName evidence="1">16S rRNA m7G methyltransferase</shortName>
    </alternativeName>
    <alternativeName>
        <fullName>Glucose-inhibited division protein B</fullName>
    </alternativeName>
</protein>
<evidence type="ECO:0000255" key="1">
    <source>
        <dbReference type="HAMAP-Rule" id="MF_00074"/>
    </source>
</evidence>
<evidence type="ECO:0000305" key="2"/>
<accession>P53363</accession>
<accession>O51197</accession>
<sequence>MISDIEFALSEHNFQFAYKDLQKINLYIKRILLLNTRFNLISNSNSNFNSILNLHVIDSLLGLSTVKEINPSEVLDVGSGAGFPGIILAIFDSSRKYYLLERSKKKSTFLKMIKLELDLENVKILEYEIEKEKKKYEFITIRAFRNMNEYALILKNLLKGGGLIMAYKGKFDRINLEVNQIKNLFSKIEVKSLNSKLRVDRNLVLLYR</sequence>
<gene>
    <name evidence="1" type="primary">rsmG</name>
    <name type="synonym">gidB</name>
    <name type="ordered locus">BB_0177</name>
</gene>
<name>RSMG_BORBU</name>
<dbReference type="EC" id="2.1.1.-" evidence="1"/>
<dbReference type="EMBL" id="X95668">
    <property type="protein sequence ID" value="CAA64969.1"/>
    <property type="molecule type" value="Genomic_DNA"/>
</dbReference>
<dbReference type="EMBL" id="AJ003222">
    <property type="protein sequence ID" value="CAA06006.1"/>
    <property type="molecule type" value="Genomic_DNA"/>
</dbReference>
<dbReference type="EMBL" id="X96434">
    <property type="protein sequence ID" value="CAA65297.1"/>
    <property type="molecule type" value="Genomic_DNA"/>
</dbReference>
<dbReference type="EMBL" id="AE000783">
    <property type="protein sequence ID" value="AAC66558.1"/>
    <property type="molecule type" value="Genomic_DNA"/>
</dbReference>
<dbReference type="EMBL" id="Z12160">
    <property type="protein sequence ID" value="CAA78150.1"/>
    <property type="molecule type" value="Genomic_DNA"/>
</dbReference>
<dbReference type="PIR" id="A70122">
    <property type="entry name" value="A70122"/>
</dbReference>
<dbReference type="RefSeq" id="NP_212311.1">
    <property type="nucleotide sequence ID" value="NC_001318.1"/>
</dbReference>
<dbReference type="RefSeq" id="WP_002665606.1">
    <property type="nucleotide sequence ID" value="NC_001318.1"/>
</dbReference>
<dbReference type="SMR" id="P53363"/>
<dbReference type="STRING" id="224326.BB_0177"/>
<dbReference type="PaxDb" id="224326-BB_0177"/>
<dbReference type="EnsemblBacteria" id="AAC66558">
    <property type="protein sequence ID" value="AAC66558"/>
    <property type="gene ID" value="BB_0177"/>
</dbReference>
<dbReference type="KEGG" id="bbu:BB_0177"/>
<dbReference type="PATRIC" id="fig|224326.49.peg.574"/>
<dbReference type="HOGENOM" id="CLU_065341_2_0_12"/>
<dbReference type="OrthoDB" id="9808773at2"/>
<dbReference type="Proteomes" id="UP000001807">
    <property type="component" value="Chromosome"/>
</dbReference>
<dbReference type="GO" id="GO:0005829">
    <property type="term" value="C:cytosol"/>
    <property type="evidence" value="ECO:0007669"/>
    <property type="project" value="TreeGrafter"/>
</dbReference>
<dbReference type="GO" id="GO:0070043">
    <property type="term" value="F:rRNA (guanine-N7-)-methyltransferase activity"/>
    <property type="evidence" value="ECO:0007669"/>
    <property type="project" value="UniProtKB-UniRule"/>
</dbReference>
<dbReference type="Gene3D" id="3.40.50.150">
    <property type="entry name" value="Vaccinia Virus protein VP39"/>
    <property type="match status" value="1"/>
</dbReference>
<dbReference type="HAMAP" id="MF_00074">
    <property type="entry name" value="16SrRNA_methyltr_G"/>
    <property type="match status" value="1"/>
</dbReference>
<dbReference type="InterPro" id="IPR003682">
    <property type="entry name" value="rRNA_ssu_MeTfrase_G"/>
</dbReference>
<dbReference type="InterPro" id="IPR029063">
    <property type="entry name" value="SAM-dependent_MTases_sf"/>
</dbReference>
<dbReference type="NCBIfam" id="TIGR00138">
    <property type="entry name" value="rsmG_gidB"/>
    <property type="match status" value="1"/>
</dbReference>
<dbReference type="PANTHER" id="PTHR31760">
    <property type="entry name" value="S-ADENOSYL-L-METHIONINE-DEPENDENT METHYLTRANSFERASES SUPERFAMILY PROTEIN"/>
    <property type="match status" value="1"/>
</dbReference>
<dbReference type="PANTHER" id="PTHR31760:SF0">
    <property type="entry name" value="S-ADENOSYL-L-METHIONINE-DEPENDENT METHYLTRANSFERASES SUPERFAMILY PROTEIN"/>
    <property type="match status" value="1"/>
</dbReference>
<dbReference type="Pfam" id="PF02527">
    <property type="entry name" value="GidB"/>
    <property type="match status" value="1"/>
</dbReference>
<dbReference type="PIRSF" id="PIRSF003078">
    <property type="entry name" value="GidB"/>
    <property type="match status" value="1"/>
</dbReference>
<dbReference type="SUPFAM" id="SSF53335">
    <property type="entry name" value="S-adenosyl-L-methionine-dependent methyltransferases"/>
    <property type="match status" value="1"/>
</dbReference>
<reference key="1">
    <citation type="submission" date="1996-02" db="EMBL/GenBank/DDBJ databases">
        <authorList>
            <person name="Old I.G."/>
        </authorList>
    </citation>
    <scope>NUCLEOTIDE SEQUENCE [GENOMIC DNA]</scope>
    <source>
        <strain>212</strain>
    </source>
</reference>
<reference key="2">
    <citation type="journal article" date="1997" name="Nature">
        <title>Genomic sequence of a Lyme disease spirochaete, Borrelia burgdorferi.</title>
        <authorList>
            <person name="Fraser C.M."/>
            <person name="Casjens S."/>
            <person name="Huang W.M."/>
            <person name="Sutton G.G."/>
            <person name="Clayton R.A."/>
            <person name="Lathigra R."/>
            <person name="White O."/>
            <person name="Ketchum K.A."/>
            <person name="Dodson R.J."/>
            <person name="Hickey E.K."/>
            <person name="Gwinn M.L."/>
            <person name="Dougherty B.A."/>
            <person name="Tomb J.-F."/>
            <person name="Fleischmann R.D."/>
            <person name="Richardson D.L."/>
            <person name="Peterson J.D."/>
            <person name="Kerlavage A.R."/>
            <person name="Quackenbush J."/>
            <person name="Salzberg S.L."/>
            <person name="Hanson M."/>
            <person name="van Vugt R."/>
            <person name="Palmer N."/>
            <person name="Adams M.D."/>
            <person name="Gocayne J.D."/>
            <person name="Weidman J.F."/>
            <person name="Utterback T.R."/>
            <person name="Watthey L."/>
            <person name="McDonald L.A."/>
            <person name="Artiach P."/>
            <person name="Bowman C."/>
            <person name="Garland S.A."/>
            <person name="Fujii C."/>
            <person name="Cotton M.D."/>
            <person name="Horst K."/>
            <person name="Roberts K.M."/>
            <person name="Hatch B."/>
            <person name="Smith H.O."/>
            <person name="Venter J.C."/>
        </authorList>
    </citation>
    <scope>NUCLEOTIDE SEQUENCE [LARGE SCALE GENOMIC DNA]</scope>
    <source>
        <strain>ATCC 35210 / DSM 4680 / CIP 102532 / B31</strain>
    </source>
</reference>
<reference key="3">
    <citation type="journal article" date="1992" name="FEMS Microbiol. Lett.">
        <title>Mapping of genes on the linear chromosome of the bacterium Borrelia burgdorferi: possible locations for its origin of replication.</title>
        <authorList>
            <person name="Old I.G."/>
            <person name="Macdougall J.H."/>
            <person name="Saint-Girons I."/>
            <person name="Davidson B.E."/>
        </authorList>
    </citation>
    <scope>NUCLEOTIDE SEQUENCE [GENOMIC DNA] OF 1-8</scope>
    <source>
        <strain>212</strain>
    </source>
</reference>
<feature type="chain" id="PRO_0000184225" description="Ribosomal RNA small subunit methyltransferase G">
    <location>
        <begin position="1"/>
        <end position="208"/>
    </location>
</feature>
<feature type="binding site" evidence="1">
    <location>
        <position position="78"/>
    </location>
    <ligand>
        <name>S-adenosyl-L-methionine</name>
        <dbReference type="ChEBI" id="CHEBI:59789"/>
    </ligand>
</feature>
<feature type="binding site" evidence="1">
    <location>
        <position position="83"/>
    </location>
    <ligand>
        <name>S-adenosyl-L-methionine</name>
        <dbReference type="ChEBI" id="CHEBI:59789"/>
    </ligand>
</feature>
<feature type="binding site" evidence="1">
    <location>
        <begin position="101"/>
        <end position="103"/>
    </location>
    <ligand>
        <name>S-adenosyl-L-methionine</name>
        <dbReference type="ChEBI" id="CHEBI:59789"/>
    </ligand>
</feature>
<feature type="binding site" evidence="1">
    <location>
        <begin position="129"/>
        <end position="130"/>
    </location>
    <ligand>
        <name>S-adenosyl-L-methionine</name>
        <dbReference type="ChEBI" id="CHEBI:59789"/>
    </ligand>
</feature>
<feature type="binding site" evidence="1">
    <location>
        <position position="142"/>
    </location>
    <ligand>
        <name>S-adenosyl-L-methionine</name>
        <dbReference type="ChEBI" id="CHEBI:59789"/>
    </ligand>
</feature>
<feature type="sequence conflict" description="In Ref. 1; CAA64969." evidence="2" ref="1">
    <original>LDVGSGAGFP</original>
    <variation>PWTLEVVLDFR</variation>
    <location>
        <begin position="75"/>
        <end position="84"/>
    </location>
</feature>
<feature type="sequence conflict" description="In Ref. 1; CAA64969/CAA06006." evidence="2" ref="1">
    <original>S</original>
    <variation>T</variation>
    <location>
        <position position="93"/>
    </location>
</feature>
<feature type="sequence conflict" description="In Ref. 1; CAA64969/CAA06006." evidence="2" ref="1">
    <original>N</original>
    <variation>S</variation>
    <location>
        <position position="146"/>
    </location>
</feature>